<protein>
    <recommendedName>
        <fullName evidence="1">Large ribosomal subunit protein bL21</fullName>
    </recommendedName>
    <alternativeName>
        <fullName evidence="2">50S ribosomal protein L21</fullName>
    </alternativeName>
</protein>
<dbReference type="EMBL" id="BX936398">
    <property type="protein sequence ID" value="CAH19704.1"/>
    <property type="molecule type" value="Genomic_DNA"/>
</dbReference>
<dbReference type="RefSeq" id="WP_002210178.1">
    <property type="nucleotide sequence ID" value="NZ_CP009712.1"/>
</dbReference>
<dbReference type="SMR" id="Q66F76"/>
<dbReference type="GeneID" id="57975202"/>
<dbReference type="KEGG" id="ypo:BZ17_2101"/>
<dbReference type="KEGG" id="yps:YPTB0464"/>
<dbReference type="PATRIC" id="fig|273123.14.peg.2227"/>
<dbReference type="Proteomes" id="UP000001011">
    <property type="component" value="Chromosome"/>
</dbReference>
<dbReference type="GO" id="GO:0005737">
    <property type="term" value="C:cytoplasm"/>
    <property type="evidence" value="ECO:0007669"/>
    <property type="project" value="UniProtKB-ARBA"/>
</dbReference>
<dbReference type="GO" id="GO:1990904">
    <property type="term" value="C:ribonucleoprotein complex"/>
    <property type="evidence" value="ECO:0007669"/>
    <property type="project" value="UniProtKB-KW"/>
</dbReference>
<dbReference type="GO" id="GO:0005840">
    <property type="term" value="C:ribosome"/>
    <property type="evidence" value="ECO:0007669"/>
    <property type="project" value="UniProtKB-KW"/>
</dbReference>
<dbReference type="GO" id="GO:0019843">
    <property type="term" value="F:rRNA binding"/>
    <property type="evidence" value="ECO:0007669"/>
    <property type="project" value="UniProtKB-UniRule"/>
</dbReference>
<dbReference type="GO" id="GO:0003735">
    <property type="term" value="F:structural constituent of ribosome"/>
    <property type="evidence" value="ECO:0007669"/>
    <property type="project" value="InterPro"/>
</dbReference>
<dbReference type="GO" id="GO:0006412">
    <property type="term" value="P:translation"/>
    <property type="evidence" value="ECO:0007669"/>
    <property type="project" value="UniProtKB-UniRule"/>
</dbReference>
<dbReference type="HAMAP" id="MF_01363">
    <property type="entry name" value="Ribosomal_bL21"/>
    <property type="match status" value="1"/>
</dbReference>
<dbReference type="InterPro" id="IPR028909">
    <property type="entry name" value="bL21-like"/>
</dbReference>
<dbReference type="InterPro" id="IPR036164">
    <property type="entry name" value="bL21-like_sf"/>
</dbReference>
<dbReference type="InterPro" id="IPR001787">
    <property type="entry name" value="Ribosomal_bL21"/>
</dbReference>
<dbReference type="InterPro" id="IPR018258">
    <property type="entry name" value="Ribosomal_bL21_CS"/>
</dbReference>
<dbReference type="NCBIfam" id="TIGR00061">
    <property type="entry name" value="L21"/>
    <property type="match status" value="1"/>
</dbReference>
<dbReference type="PANTHER" id="PTHR21349">
    <property type="entry name" value="50S RIBOSOMAL PROTEIN L21"/>
    <property type="match status" value="1"/>
</dbReference>
<dbReference type="PANTHER" id="PTHR21349:SF0">
    <property type="entry name" value="LARGE RIBOSOMAL SUBUNIT PROTEIN BL21M"/>
    <property type="match status" value="1"/>
</dbReference>
<dbReference type="Pfam" id="PF00829">
    <property type="entry name" value="Ribosomal_L21p"/>
    <property type="match status" value="1"/>
</dbReference>
<dbReference type="SUPFAM" id="SSF141091">
    <property type="entry name" value="L21p-like"/>
    <property type="match status" value="1"/>
</dbReference>
<dbReference type="PROSITE" id="PS01169">
    <property type="entry name" value="RIBOSOMAL_L21"/>
    <property type="match status" value="1"/>
</dbReference>
<organism>
    <name type="scientific">Yersinia pseudotuberculosis serotype I (strain IP32953)</name>
    <dbReference type="NCBI Taxonomy" id="273123"/>
    <lineage>
        <taxon>Bacteria</taxon>
        <taxon>Pseudomonadati</taxon>
        <taxon>Pseudomonadota</taxon>
        <taxon>Gammaproteobacteria</taxon>
        <taxon>Enterobacterales</taxon>
        <taxon>Yersiniaceae</taxon>
        <taxon>Yersinia</taxon>
    </lineage>
</organism>
<proteinExistence type="inferred from homology"/>
<accession>Q66F76</accession>
<name>RL21_YERPS</name>
<comment type="function">
    <text evidence="1">This protein binds to 23S rRNA in the presence of protein L20.</text>
</comment>
<comment type="subunit">
    <text evidence="1">Part of the 50S ribosomal subunit. Contacts protein L20.</text>
</comment>
<comment type="similarity">
    <text evidence="1">Belongs to the bacterial ribosomal protein bL21 family.</text>
</comment>
<evidence type="ECO:0000255" key="1">
    <source>
        <dbReference type="HAMAP-Rule" id="MF_01363"/>
    </source>
</evidence>
<evidence type="ECO:0000305" key="2"/>
<gene>
    <name evidence="1" type="primary">rplU</name>
    <name type="ordered locus">YPTB0464</name>
</gene>
<reference key="1">
    <citation type="journal article" date="2004" name="Proc. Natl. Acad. Sci. U.S.A.">
        <title>Insights into the evolution of Yersinia pestis through whole-genome comparison with Yersinia pseudotuberculosis.</title>
        <authorList>
            <person name="Chain P.S.G."/>
            <person name="Carniel E."/>
            <person name="Larimer F.W."/>
            <person name="Lamerdin J."/>
            <person name="Stoutland P.O."/>
            <person name="Regala W.M."/>
            <person name="Georgescu A.M."/>
            <person name="Vergez L.M."/>
            <person name="Land M.L."/>
            <person name="Motin V.L."/>
            <person name="Brubaker R.R."/>
            <person name="Fowler J."/>
            <person name="Hinnebusch J."/>
            <person name="Marceau M."/>
            <person name="Medigue C."/>
            <person name="Simonet M."/>
            <person name="Chenal-Francisque V."/>
            <person name="Souza B."/>
            <person name="Dacheux D."/>
            <person name="Elliott J.M."/>
            <person name="Derbise A."/>
            <person name="Hauser L.J."/>
            <person name="Garcia E."/>
        </authorList>
    </citation>
    <scope>NUCLEOTIDE SEQUENCE [LARGE SCALE GENOMIC DNA]</scope>
    <source>
        <strain>IP32953</strain>
    </source>
</reference>
<sequence>MYAVFQSGGKQHRVSEGQTIRLEKLDIATGETIEFDQVLMIANGEEINIGAPLVDGGKIKAEIIAHGRGEKIKIVKFRRRKHYRKQQGHRQWFTDVKITGISA</sequence>
<feature type="chain" id="PRO_0000269438" description="Large ribosomal subunit protein bL21">
    <location>
        <begin position="1"/>
        <end position="103"/>
    </location>
</feature>
<keyword id="KW-0687">Ribonucleoprotein</keyword>
<keyword id="KW-0689">Ribosomal protein</keyword>
<keyword id="KW-0694">RNA-binding</keyword>
<keyword id="KW-0699">rRNA-binding</keyword>